<organism>
    <name type="scientific">Human coronavirus HKU1 (isolate N5)</name>
    <name type="common">HCoV-HKU1</name>
    <dbReference type="NCBI Taxonomy" id="443241"/>
    <lineage>
        <taxon>Viruses</taxon>
        <taxon>Riboviria</taxon>
        <taxon>Orthornavirae</taxon>
        <taxon>Pisuviricota</taxon>
        <taxon>Pisoniviricetes</taxon>
        <taxon>Nidovirales</taxon>
        <taxon>Cornidovirineae</taxon>
        <taxon>Coronaviridae</taxon>
        <taxon>Orthocoronavirinae</taxon>
        <taxon>Betacoronavirus</taxon>
        <taxon>Embecovirus</taxon>
        <taxon>Human coronavirus HKU1</taxon>
    </lineage>
</organism>
<reference key="1">
    <citation type="journal article" date="2006" name="J. Virol.">
        <title>Comparative analysis of 22 coronavirus HKU1 genomes reveals a novel genotype and evidence of natural recombination in coronavirus HKU1.</title>
        <authorList>
            <person name="Woo P.C.Y."/>
            <person name="Lau S.K.P."/>
            <person name="Yip C.C.Y."/>
            <person name="Huang Y."/>
            <person name="Tsoi H.-W."/>
            <person name="Chan K.-H."/>
            <person name="Yuen K.-Y."/>
        </authorList>
    </citation>
    <scope>NUCLEOTIDE SEQUENCE [GENOMIC RNA]</scope>
</reference>
<accession>P0C6U5</accession>
<accession>Q0ZME9</accession>
<sequence>MIKTSKYGLGFKWAPEFRWLLPDAAEELASPMKSDEGGLCPSTGQAMESVGFVYDNHVKIDCRCILGQEWHVQSNLIRDIFVHEDLHVVEVLTKTAVKSGTAILIKSPLHSLGGFPKGYVMGLFRSYKTKRYVVHHLSMTTSTTNFGEDFFGWIVPFGFMPSYVHKWFQFCRLYIEESDLIISNFKFDDYDFSVEAAYAEVHAEPKGKYSQKAYALLRQYRGIKPVLFVDQYGCDYSGKLADCLQAYGHYSLQDMRQKQSVWLANCDFDIVVAWHVVRDSRFVMRLQTIATICGIKYVAQPTEDVVDGDVVIREPVHLLSADAIVLKLPSLMKVMTHMDDFSIKSIYNVDLCDCGFVMQYGYVDCFNDNCDFYGWVSGNMMDGFSCPLCCTVYDSSEVKAQSSGVIPENPVLFTNSTDTVNPDSFNLYGYSVTPFGSCIYWSPRPGLWIPIIKSSVKSYDDLVYSGVVGCKSIVKETALITHALYLDYVQCKCGNLEQNHILGVNNSWCRQLLLNRGDYNMLLKNIDLFVKRRADFACKFAVCGDGFVPFLLDGLIPRSYYLIQSGIFFTSLMSQFSQEVSDMCLKMCILFMDRVSVATFYIEHYVNRLVTQFKLLGTTLVNKMVNWFNTMLDASAPATGWLLYQLLNGFFVVSQANLNFVALIPDYAKILVNKFYTFFKLLLECVTVDVLKDMPVLKTINGLVCIVGNKFYNVSTGLIPGFVLPCNAQEQQIYFFEGVAESVIVEDDVIENVKSSLSSYEYCQPPKSVEKICIIDNMYMGKCGDKFFPIVMNDKNICLLDHAWRFPCAGRKVNFNEKPVVMEIPSLMTVKVMFDLDSTFDDILGKVCSEFEVEKGVTVDDFVAVVCDAIENALNSCKEHPVVGYQVRAFLNKLNENVVYLFDEAGDEAMASRMYCTFAIEDVEDVISSEAVEDTIDGVVEDTINDDEDVVTGDNDDEDVVTGDNDDEDVVTGDNDDEDVVTGDNDDEDVVTGDNDDEDVVTGDNDDEDVVTGDNDDEDVVTGDNNDEDVVTGDNNDEESVTGDNDDQIVVTGDDVDDIESIYDFDTYKALLVFNDVYNDALFVSYGSSVETETYFKVNGLWSPTITHTNCWLRSVLLVMQKLPFKFKDLAIENMWLSYKVGYNQSFVDYLLTTIPKAIVLPQGGYVADFAYWFLNQFDINAYANWCCLKCGFSFDLNGLDAVFFYGDIVSHVCKCGHNMTLIAADLPCTLHFSLFDDNFCAFCTPKKIFIAACAVDVNVCHSVAVIGDEQIDGKFVTKFSGDKFDFIVGYGMSFSMSSFELAQLYGLCITPNVCFVKGDIINVARLVKADVIVNPANGHMLHGGGVAKAIAVAAGKKFSKETAAMVKSKGVCQVGDCYVSTGGKLCKTILNIVGPDARQDGRQSYVLLARAYKHLNNYDCCLSTLISAGIFSVPADVSLTYLLGVVDKQVILVSNNKEDFDIIQKCQITSVVGTKALAVRLTANVGRVIKFETDAYKLFLSGDDCFVSNSSVIQEVLLLRHDIQLNNDVRDYLLSKMTSLPKDWRLINKFDVINGVKTVKYFECPNSIYICSQGKDFGYVCDGSFYKATVNQVCVLLAKKIDVLLTVDGVNFKSISLTVGEVFGKILGNVFCDGIDVTKLKCSDFYADKILYQYENLSLADISAVQSSFGFDQQQLLAYYNFLTVCKWSVVVNGPFFSFEQSHNNCYVNVACLMLQHINLKFNKWQWQEAWYEFRAGRPHRLVALVLAKGHFKFDEPSDATDFIRVVLKQADLSGAICELELICDCGIKQESRVGVDAVMHFGTLAKTDLFNGYKIGCNCAGRIVHCTKLNVPFLICSNTPLSKDLPDDVVAANMFMGVGVGHYTHLKCGSPYQHYDACSVKKYTGVSGCLTDCLYLKNLTQTFTSMLTNYFLDDVEMVAYNPDLSQYYCDNGKYYTKPIIKAQFKPFAKVDGVYTNFKLVGHDICAQLNDKLGFNVDLPFVEYKVTVWPVATGDVVLASDDLYVKRYFKGCETFGKPVIWFCHDEASLNSLTYFNKPSFKSENRYSVLSVDSVSEESQGNVVTSVMESQISTKEVKLKGVRKTVKIEDAIIVNDENSSIKVVKSLSLVDVWDMYLTGCDYVVWVANELSRLVKSPTVREYIRYGIKPITIPIDLLCLRDDNQTLLVPKIFKARAIEFYGFLKWLFIYVFSLLHFTNDKTIFYTTEIASKFTFNLFCLALKNAFQTFRWSIFIKGFLVVATVFLFWFNFLYINVIFSDFYLPNISVFPIFVGRIVMWIKATFGLVTICDFYSKLGVGFTSHFCNGSFICELCHSGFDMLDTYAAIDFVQYEVDRRVLFDYVSLVKLIVELVIGYSLYTVWFYPLFCLIGLQLFTTWLPDLFMLETMHWLIRFIVFVANMLPAFVLLRFYIVVTAMYKVVGFIRHIVYGCNKAGCLFCYKRNCSVRVKCSTIVGGVIRYYDITANGGTGFCVKHQWNCFNCHSFKPGNTFITVEAAIELSKELKRPVNPTDASHYVVTDIKQVGCMMRLFYDRDGQRVYDDVDASLFVDINNLLHSKVKVVPNLYVVVVESDADRANFLNAVVFYAQSLYRPILLVDKKLITTACNGISVTQIMFDVYVDTFMSHFDVDRKSFNNFVNIAHASLREGVQLEKVLDTFVGCVRKCCSIDSDVETRFITKSMISAVAAGLEFTDENYNNLVPTYLKSDNIVAADLGVLIQNGAKHVQGNVAKVANISCIWFIDAFNQLTADLQHKLKKACVKTGLKLKLTFNKQEASVPILTTPFSLKGGVVLSNLLYILFFISLICFILLWALLPTYSVYKSDIHLPAYASFKVIDNGVVRDISVNDLCFANKFFQFDQWYESTFGSVYYHNSMDCPIVVAVMDEDIGSTMFNVPTKVLRYGFHVLHFLTYAFASDSVQCYTPHIQISYNDFYASGCVLSSLCTMFKRGDGTPHPYCYTDGVMKNASLYTSLVPHTRYSLANSNGFIRFPDVISEGIVRIVRTRSMTYCRVGACEYAEEGICFNFNSSWVLNNDYYRSMPGTFCGRDFFDLFYQFFSSLIRPIDFFSLTASSIFGAILAIVVVLVFYYLIKLKRAFGDYTSVVVINVIVWCINFLMLFVFQVYPICACVYACFYFYVTLYFPSEISVIMHLQWIVMYGAIMPFWFCVTYVAMVIANHVLWLFSYCRKIGVNVCSDSTFEETSLTTFMITKDSYCRLKNSVSDVAYNRYLSLYNKYRYYSGKMDTAAYREAACSQLAKAMETFNHNNGNDVLYQPPTASVSTSFLQSGIVKMVSPTSKIEPCLVSVTYGSMTLNGLWLDDKVYCPRHVICLSSNMNEPDYSALLCRVTLGDFTIMSGRMSLTVVSYQMQGCQLVLTVSLQNPYTPKYTFGVVKPGETFTVLAAYNGRPQGAFHVTMRSSYTIKGSFLCGSCGSVGYVLTGDSVKFVYMHQLELSTGCHTGTDFNGNFYGPYRDAQVVQLPVKDYVQTVNVIAWLYAAILNNCAWFVQNDVCSIEDFNVWAMTNGFSQVKADLVLDALASMTGVSIETLLAAIKRLYMGFQGRQILGSCTFEDELAPSDVYQQLAGVKLQSKTKRFIKETIYWILISTFLFSCIISAFVKWTIFMYINTHMIGVTLCVLCFVSFMMLLVKHKHFYLTMYIIPVLCTLFYVNYLVVYKEGFRGFTYVWLSHFVPAVNFTYVYEVFYGCILCVFAIFITMHSINHDIFSLMFLVGRIVTLISMWYFGSNLEEDVLLFITAFLGTYTWTTILSLAIAKIVANWLSVNIFYFTDVPYIKLILLSYLFIGYILSCYWGFFSLLNSVFRMPMGVYNYKISVQELRYMNANGLRPPRNSFEAILLNLKLLGIGGVPVIEVSQIQSKLTDVKCANVVLLNCLQHLHVASNSKLWQYCSVLHNEILSTSDLSVAFDKLAQLLIVLFSNPAAVDTKCLASIDEVSDDYVQDSTVLQALQSEFVNMASFVEYEVAKKNLADAKNSGSVNQQQIKQLEKACNIAKSVYERDKAVARKLERMADLALTNMYKEARINDKKSKVVSALQTMLFSMVRKLDNQALNSILDNAVKGCVPLSAIPALAANTLTIIIPDKQVFDKVVDNVYVTYAGSVWHIQTVQDADGINKQLTDISVDSNWPLVIIANRYNEVANAVMQNNELMPHKLKIQVVNSGSDINCNIPTQCYYNNVSSGRIVYAVLSDVDGLKYTKIMKDDGNCVVLELDPPCKFSIQDVKGLKIKYLYFIKGCNTLARGWVVGTLSSTIRLQAGVATEYAANSSILSLCAFSVDPKKTYLDYIQQGGVPIINCVKMLCDHAGTGMAITIKPEATINQDSYGGASVCIYCRARVEHPDVDGICKLRGKFVQVPLGIKDPILYVLTHDVCQVCGFWRDGSCSCVGSSVAVQSKDLNFLNGLGVLV</sequence>
<comment type="function">
    <text evidence="1">The papain-like proteinase 1 (PL1-PRO) and papain-like proteinase 2 (PL2-PRO) are responsible for the cleavages located at the N-terminus of the replicase polyprotein. In addition, PLP2 possesses a deubiquitinating/deISGylating activity and processes both 'Lys-48'- and 'Lys-63'-linked polyubiquitin chains from cellular substrates. Antagonizes innate immune induction of type I interferon by blocking the phosphorylation, dimerization and subsequent nuclear translocation of host IRF-3 (By similarity).</text>
</comment>
<comment type="function">
    <molecule>3C-like proteinase nsp5</molecule>
    <text evidence="7">Responsible for the majority of cleavages as it cleaves the C-terminus of replicase polyprotein at 11 sites. Recognizes substrates containing the core sequence [ILMVF]-Q-|-[SGACN]. Inhibited by the substrate-analog Cbz-Val-Asn-Ser-Thr-Leu-Gln-CMK. Also contains an ADP-ribose-1''-phosphate (ADRP)-binding function (By similarity).</text>
</comment>
<comment type="function">
    <text evidence="1">Nsp7-nsp8 hexadecamer may possibly confer processivity to the polymerase, maybe by binding to dsRNA or by producing primers utilized by the latter.</text>
</comment>
<comment type="function">
    <molecule>RNA-capping enzyme subunit nsp9</molecule>
    <text evidence="2">Catalytic subunit of viral RNA capping enzyme which catalyzes the RNA guanylyltransferase reaction for genomic and sub-genomic RNAs. The kinase-like NiRAN domain of NSP12 transfers RNA to the amino terminus of NSP9, forming a covalent RNA-protein intermediate. Subsequently, the NiRAN domain transfers RNA to GDP, forming the core cap structure GpppA-RNA. The NSP14 and NSP16 methyltransferases then add methyl groups to form functional cap structures.</text>
</comment>
<comment type="function">
    <molecule>Non-structural protein 1</molecule>
    <text evidence="1">Binds to the 40S ribosomal subunit and inhibits host translation. The nsp1-40S ribosome complex further induces an endonucleolytic cleavage near the 5'UTR of host mRNAs, targeting them for degradation. By suppressing host gene expression, nsp1 facilitates efficient viral gene expression in infected cells and evasion from host immune response (By similarity).</text>
</comment>
<comment type="catalytic activity">
    <molecule>Papain-like protease nsp3</molecule>
    <reaction evidence="2">
        <text>Thiol-dependent hydrolysis of ester, thioester, amide, peptide and isopeptide bonds formed by the C-terminal Gly of ubiquitin (a 76-residue protein attached to proteins as an intracellular targeting signal).</text>
        <dbReference type="EC" id="3.4.19.12"/>
    </reaction>
</comment>
<comment type="catalytic activity">
    <molecule>3C-like proteinase nsp5</molecule>
    <reaction evidence="2">
        <text>TSAVLQ-|-SGFRK-NH2 and SGVTFQ-|-GKFKK the two peptides corresponding to the two self-cleavage sites of the SARS 3C-like proteinase are the two most reactive peptide substrates. The enzyme exhibits a strong preference for substrates containing Gln at P1 position and Leu at P2 position.</text>
        <dbReference type="EC" id="3.4.22.69"/>
    </reaction>
</comment>
<comment type="catalytic activity">
    <molecule>RNA-capping enzyme subunit nsp9</molecule>
    <reaction evidence="2">
        <text>a 5'-end diphospho-ribonucleoside in mRNA + GTP + H(+) = a 5'-end (5'-triphosphoguanosine)-ribonucleoside in mRNA + diphosphate</text>
        <dbReference type="Rhea" id="RHEA:67012"/>
        <dbReference type="Rhea" id="RHEA-COMP:17165"/>
        <dbReference type="Rhea" id="RHEA-COMP:17166"/>
        <dbReference type="ChEBI" id="CHEBI:15378"/>
        <dbReference type="ChEBI" id="CHEBI:33019"/>
        <dbReference type="ChEBI" id="CHEBI:37565"/>
        <dbReference type="ChEBI" id="CHEBI:167616"/>
        <dbReference type="ChEBI" id="CHEBI:167617"/>
        <dbReference type="EC" id="2.7.7.50"/>
    </reaction>
    <physiologicalReaction direction="right-to-left" evidence="2">
        <dbReference type="Rhea" id="RHEA:67014"/>
    </physiologicalReaction>
</comment>
<comment type="subunit">
    <text evidence="1">3CL-PRO exists as monomer and homodimer. Eight copies of nsp7 and eight copies of nsp8 assemble to form a heterohexadecamer. Nsp9 is a dimer. Nsp10 forms a dodecamer (By similarity).</text>
</comment>
<comment type="subcellular location">
    <molecule>Papain-like protease nsp3</molecule>
    <subcellularLocation>
        <location evidence="24">Host membrane</location>
        <topology evidence="24">Multi-pass membrane protein</topology>
    </subcellularLocation>
</comment>
<comment type="subcellular location">
    <molecule>Non-structural protein 4</molecule>
    <subcellularLocation>
        <location evidence="24">Host membrane</location>
        <topology evidence="24">Multi-pass membrane protein</topology>
    </subcellularLocation>
</comment>
<comment type="subcellular location">
    <molecule>Non-structural protein 6</molecule>
    <subcellularLocation>
        <location evidence="24">Host membrane</location>
        <topology evidence="24">Multi-pass membrane protein</topology>
    </subcellularLocation>
</comment>
<comment type="subcellular location">
    <molecule>Non-structural protein 7</molecule>
    <subcellularLocation>
        <location evidence="1">Host cytoplasm</location>
        <location evidence="1">Host perinuclear region</location>
    </subcellularLocation>
    <text>nsp7, nsp8, nsp9 and nsp10 are localized in cytoplasmic foci, largely perinuclear. Late in infection, they merge into confluent complexes.</text>
</comment>
<comment type="subcellular location">
    <molecule>Non-structural protein 8</molecule>
    <subcellularLocation>
        <location evidence="1">Host cytoplasm</location>
        <location evidence="1">Host perinuclear region</location>
    </subcellularLocation>
    <text>nsp7, nsp8, nsp9 and nsp10 are localized in cytoplasmic foci, largely perinuclear. Late in infection, they merge into confluent complexes.</text>
</comment>
<comment type="subcellular location">
    <molecule>RNA-capping enzyme subunit nsp9</molecule>
    <subcellularLocation>
        <location evidence="1">Host cytoplasm</location>
        <location evidence="1">Host perinuclear region</location>
    </subcellularLocation>
    <text>nsp7, nsp8, nsp9 and nsp10 are localized in cytoplasmic foci, largely perinuclear. Late in infection, they merge into confluent complexes.</text>
</comment>
<comment type="subcellular location">
    <molecule>Non-structural protein 10</molecule>
    <subcellularLocation>
        <location evidence="1">Host cytoplasm</location>
        <location evidence="1">Host perinuclear region</location>
    </subcellularLocation>
    <text>nsp7, nsp8, nsp9 and nsp10 are localized in cytoplasmic foci, largely perinuclear. Late in infection, they merge into confluent complexes.</text>
</comment>
<comment type="alternative products">
    <event type="ribosomal frameshifting"/>
    <isoform>
        <id>P0C6U5-1</id>
        <name>Replicase polyprotein 1a</name>
        <name>pp1a</name>
        <name>ORF1a polyprotein</name>
        <sequence type="displayed"/>
    </isoform>
    <isoform>
        <id>P0C6X4-1</id>
        <name>Replicase polyprotein 1ab</name>
        <name>pp1ab</name>
        <sequence type="external"/>
    </isoform>
</comment>
<comment type="domain">
    <text>The hydrophobic domains (HD) could mediate the membrane association of the replication complex and thereby alter the architecture of the host cell membrane.</text>
</comment>
<comment type="PTM">
    <text evidence="1">Specific enzymatic cleavages in vivo by its own proteases yield mature proteins. 3CL-PRO and PL-PRO proteinases are autocatalytically processed (By similarity).</text>
</comment>
<comment type="miscellaneous">
    <text>Isolate N5 belongs to genotype C. Genotype C probably arose from recombination between genotypes A and B.</text>
</comment>
<comment type="miscellaneous">
    <molecule>Isoform Replicase polyprotein 1a</molecule>
    <text>Produced by conventional translation.</text>
</comment>
<comment type="similarity">
    <text evidence="24">Belongs to the coronaviruses polyprotein 1ab family.</text>
</comment>
<protein>
    <recommendedName>
        <fullName>Replicase polyprotein 1a</fullName>
        <shortName>pp1a</shortName>
    </recommendedName>
    <alternativeName>
        <fullName>ORF1a polyprotein</fullName>
    </alternativeName>
    <component>
        <recommendedName>
            <fullName>Non-structural protein 1</fullName>
            <shortName>nsp1</shortName>
        </recommendedName>
        <alternativeName>
            <fullName>p28</fullName>
        </alternativeName>
    </component>
    <component>
        <recommendedName>
            <fullName>Non-structural protein 2</fullName>
            <shortName>nsp2</shortName>
        </recommendedName>
        <alternativeName>
            <fullName>p65</fullName>
        </alternativeName>
    </component>
    <component>
        <recommendedName>
            <fullName>Papain-like protease nsp3</fullName>
            <shortName>PL-PRO</shortName>
            <ecNumber>3.4.19.12</ecNumber>
            <ecNumber>3.4.22.-</ecNumber>
        </recommendedName>
        <alternativeName>
            <fullName>Non-structural protein 3</fullName>
            <shortName>nsp3</shortName>
        </alternativeName>
        <alternativeName>
            <fullName>PL1-PRO/PL2-PRO</fullName>
        </alternativeName>
        <alternativeName>
            <fullName>PL1/PL2</fullName>
        </alternativeName>
        <alternativeName>
            <fullName>PL2-PRO</fullName>
        </alternativeName>
        <alternativeName>
            <fullName>Papain-like proteinases 1/2</fullName>
        </alternativeName>
        <alternativeName>
            <fullName>p210</fullName>
        </alternativeName>
    </component>
    <component>
        <recommendedName>
            <fullName>Non-structural protein 4</fullName>
            <shortName>nsp4</shortName>
        </recommendedName>
        <alternativeName>
            <fullName>Peptide HD2</fullName>
        </alternativeName>
        <alternativeName>
            <fullName>p44</fullName>
        </alternativeName>
    </component>
    <component>
        <recommendedName>
            <fullName>3C-like proteinase nsp5</fullName>
            <shortName>3CL-PRO</shortName>
            <shortName>3CLp</shortName>
            <ecNumber>3.4.22.69</ecNumber>
        </recommendedName>
        <alternativeName>
            <fullName>M-PRO</fullName>
        </alternativeName>
        <alternativeName>
            <fullName>nsp5</fullName>
        </alternativeName>
        <alternativeName>
            <fullName>p27</fullName>
        </alternativeName>
    </component>
    <component>
        <recommendedName>
            <fullName>Non-structural protein 6</fullName>
            <shortName>nsp6</shortName>
        </recommendedName>
    </component>
    <component>
        <recommendedName>
            <fullName>Non-structural protein 7</fullName>
            <shortName>nsp7</shortName>
        </recommendedName>
        <alternativeName>
            <fullName>p10</fullName>
        </alternativeName>
    </component>
    <component>
        <recommendedName>
            <fullName>Non-structural protein 8</fullName>
            <shortName>nsp8</shortName>
        </recommendedName>
        <alternativeName>
            <fullName>p22</fullName>
        </alternativeName>
    </component>
    <component>
        <recommendedName>
            <fullName>RNA-capping enzyme subunit nsp9</fullName>
        </recommendedName>
        <alternativeName>
            <fullName>Non-structural protein 9</fullName>
            <shortName>nsp9</shortName>
            <ecNumber>2.7.7.50</ecNumber>
        </alternativeName>
        <alternativeName>
            <fullName>p12</fullName>
        </alternativeName>
    </component>
    <component>
        <recommendedName>
            <fullName>Non-structural protein 10</fullName>
            <shortName>nsp10</shortName>
        </recommendedName>
        <alternativeName>
            <fullName>Growth factor-like peptide</fullName>
            <shortName>GFL</shortName>
        </alternativeName>
        <alternativeName>
            <fullName>p15</fullName>
        </alternativeName>
    </component>
    <component>
        <recommendedName>
            <fullName>Non-structural protein 11</fullName>
            <shortName>nsp11</shortName>
        </recommendedName>
    </component>
</protein>
<dbReference type="EC" id="3.4.19.12"/>
<dbReference type="EC" id="3.4.22.-"/>
<dbReference type="EC" id="3.4.22.69"/>
<dbReference type="EC" id="2.7.7.50"/>
<dbReference type="EMBL" id="DQ339101">
    <property type="status" value="NOT_ANNOTATED_CDS"/>
    <property type="molecule type" value="Genomic_RNA"/>
</dbReference>
<dbReference type="SMR" id="P0C6U5"/>
<dbReference type="IntAct" id="P0C6U5">
    <property type="interactions" value="2"/>
</dbReference>
<dbReference type="Proteomes" id="UP000001985">
    <property type="component" value="Genome"/>
</dbReference>
<dbReference type="GO" id="GO:0033644">
    <property type="term" value="C:host cell membrane"/>
    <property type="evidence" value="ECO:0007669"/>
    <property type="project" value="UniProtKB-SubCell"/>
</dbReference>
<dbReference type="GO" id="GO:0044220">
    <property type="term" value="C:host cell perinuclear region of cytoplasm"/>
    <property type="evidence" value="ECO:0007669"/>
    <property type="project" value="UniProtKB-SubCell"/>
</dbReference>
<dbReference type="GO" id="GO:0016020">
    <property type="term" value="C:membrane"/>
    <property type="evidence" value="ECO:0007669"/>
    <property type="project" value="UniProtKB-KW"/>
</dbReference>
<dbReference type="GO" id="GO:0004843">
    <property type="term" value="F:cysteine-type deubiquitinase activity"/>
    <property type="evidence" value="ECO:0007669"/>
    <property type="project" value="UniProtKB-EC"/>
</dbReference>
<dbReference type="GO" id="GO:0004197">
    <property type="term" value="F:cysteine-type endopeptidase activity"/>
    <property type="evidence" value="ECO:0007669"/>
    <property type="project" value="InterPro"/>
</dbReference>
<dbReference type="GO" id="GO:0004519">
    <property type="term" value="F:endonuclease activity"/>
    <property type="evidence" value="ECO:0007669"/>
    <property type="project" value="UniProtKB-KW"/>
</dbReference>
<dbReference type="GO" id="GO:0008168">
    <property type="term" value="F:methyltransferase activity"/>
    <property type="evidence" value="ECO:0007669"/>
    <property type="project" value="UniProtKB-KW"/>
</dbReference>
<dbReference type="GO" id="GO:0008242">
    <property type="term" value="F:omega peptidase activity"/>
    <property type="evidence" value="ECO:0007669"/>
    <property type="project" value="InterPro"/>
</dbReference>
<dbReference type="GO" id="GO:0003968">
    <property type="term" value="F:RNA-directed RNA polymerase activity"/>
    <property type="evidence" value="ECO:0007669"/>
    <property type="project" value="InterPro"/>
</dbReference>
<dbReference type="GO" id="GO:0003727">
    <property type="term" value="F:single-stranded RNA binding"/>
    <property type="evidence" value="ECO:0007669"/>
    <property type="project" value="InterPro"/>
</dbReference>
<dbReference type="GO" id="GO:0008270">
    <property type="term" value="F:zinc ion binding"/>
    <property type="evidence" value="ECO:0007669"/>
    <property type="project" value="UniProtKB-KW"/>
</dbReference>
<dbReference type="GO" id="GO:0032259">
    <property type="term" value="P:methylation"/>
    <property type="evidence" value="ECO:0007669"/>
    <property type="project" value="UniProtKB-KW"/>
</dbReference>
<dbReference type="GO" id="GO:0006508">
    <property type="term" value="P:proteolysis"/>
    <property type="evidence" value="ECO:0007669"/>
    <property type="project" value="UniProtKB-KW"/>
</dbReference>
<dbReference type="GO" id="GO:0010506">
    <property type="term" value="P:regulation of autophagy"/>
    <property type="evidence" value="ECO:0007669"/>
    <property type="project" value="InterPro"/>
</dbReference>
<dbReference type="GO" id="GO:0039520">
    <property type="term" value="P:symbiont-mediated activation of host autophagy"/>
    <property type="evidence" value="ECO:0007669"/>
    <property type="project" value="UniProtKB-KW"/>
</dbReference>
<dbReference type="GO" id="GO:0039595">
    <property type="term" value="P:symbiont-mediated degradation of host mRNA"/>
    <property type="evidence" value="ECO:0007669"/>
    <property type="project" value="UniProtKB-KW"/>
</dbReference>
<dbReference type="GO" id="GO:0039648">
    <property type="term" value="P:symbiont-mediated perturbation of host ubiquitin-like protein modification"/>
    <property type="evidence" value="ECO:0007669"/>
    <property type="project" value="UniProtKB-KW"/>
</dbReference>
<dbReference type="GO" id="GO:0039548">
    <property type="term" value="P:symbiont-mediated suppression of host cytoplasmic pattern recognition receptor signaling pathway via inhibition of IRF3 activity"/>
    <property type="evidence" value="ECO:0007669"/>
    <property type="project" value="UniProtKB-KW"/>
</dbReference>
<dbReference type="GO" id="GO:0039657">
    <property type="term" value="P:symbiont-mediated suppression of host gene expression"/>
    <property type="evidence" value="ECO:0007669"/>
    <property type="project" value="UniProtKB-KW"/>
</dbReference>
<dbReference type="GO" id="GO:0039579">
    <property type="term" value="P:symbiont-mediated suppression of host ISG15-protein conjugation"/>
    <property type="evidence" value="ECO:0007669"/>
    <property type="project" value="UniProtKB-KW"/>
</dbReference>
<dbReference type="GO" id="GO:0039502">
    <property type="term" value="P:symbiont-mediated suppression of host type I interferon-mediated signaling pathway"/>
    <property type="evidence" value="ECO:0007669"/>
    <property type="project" value="UniProtKB-KW"/>
</dbReference>
<dbReference type="GO" id="GO:0019079">
    <property type="term" value="P:viral genome replication"/>
    <property type="evidence" value="ECO:0007669"/>
    <property type="project" value="InterPro"/>
</dbReference>
<dbReference type="GO" id="GO:0019082">
    <property type="term" value="P:viral protein processing"/>
    <property type="evidence" value="ECO:0007669"/>
    <property type="project" value="InterPro"/>
</dbReference>
<dbReference type="GO" id="GO:0075523">
    <property type="term" value="P:viral translational frameshifting"/>
    <property type="evidence" value="ECO:0007669"/>
    <property type="project" value="UniProtKB-KW"/>
</dbReference>
<dbReference type="CDD" id="cd21901">
    <property type="entry name" value="alpha_betaCoV_Nsp10"/>
    <property type="match status" value="1"/>
</dbReference>
<dbReference type="CDD" id="cd21560">
    <property type="entry name" value="betaCoV-Nsp6"/>
    <property type="match status" value="1"/>
</dbReference>
<dbReference type="CDD" id="cd21519">
    <property type="entry name" value="betaCoV_Nsp2_MHV-like"/>
    <property type="match status" value="1"/>
</dbReference>
<dbReference type="CDD" id="cd21666">
    <property type="entry name" value="betaCoV_Nsp5_Mpro"/>
    <property type="match status" value="1"/>
</dbReference>
<dbReference type="CDD" id="cd21827">
    <property type="entry name" value="betaCoV_Nsp7"/>
    <property type="match status" value="1"/>
</dbReference>
<dbReference type="CDD" id="cd21831">
    <property type="entry name" value="betaCoV_Nsp8"/>
    <property type="match status" value="1"/>
</dbReference>
<dbReference type="CDD" id="cd21898">
    <property type="entry name" value="betaCoV_Nsp9"/>
    <property type="match status" value="1"/>
</dbReference>
<dbReference type="CDD" id="cd21732">
    <property type="entry name" value="betaCoV_PLPro"/>
    <property type="match status" value="1"/>
</dbReference>
<dbReference type="CDD" id="cd21473">
    <property type="entry name" value="cv_Nsp4_TM"/>
    <property type="match status" value="1"/>
</dbReference>
<dbReference type="CDD" id="cd21557">
    <property type="entry name" value="Macro_X_Nsp3-like"/>
    <property type="match status" value="1"/>
</dbReference>
<dbReference type="CDD" id="cd21879">
    <property type="entry name" value="MHV-like_Nsp1"/>
    <property type="match status" value="1"/>
</dbReference>
<dbReference type="CDD" id="cd21812">
    <property type="entry name" value="MHV-like_Nsp3_betaSM"/>
    <property type="match status" value="1"/>
</dbReference>
<dbReference type="CDD" id="cd21824">
    <property type="entry name" value="MHV-like_Nsp3_NAB"/>
    <property type="match status" value="1"/>
</dbReference>
<dbReference type="CDD" id="cd21714">
    <property type="entry name" value="TM_Y_MHV-like_Nsp3_C"/>
    <property type="match status" value="1"/>
</dbReference>
<dbReference type="CDD" id="cd21467">
    <property type="entry name" value="Ubl1_cv_Nsp3_N-like"/>
    <property type="match status" value="1"/>
</dbReference>
<dbReference type="FunFam" id="1.10.150.420:FF:000001">
    <property type="entry name" value="Replicase polyprotein"/>
    <property type="match status" value="1"/>
</dbReference>
<dbReference type="Gene3D" id="1.10.8.1190">
    <property type="match status" value="2"/>
</dbReference>
<dbReference type="Gene3D" id="2.60.120.1680">
    <property type="match status" value="1"/>
</dbReference>
<dbReference type="Gene3D" id="3.10.20.350">
    <property type="match status" value="1"/>
</dbReference>
<dbReference type="Gene3D" id="3.10.20.540">
    <property type="match status" value="1"/>
</dbReference>
<dbReference type="Gene3D" id="6.10.140.2090">
    <property type="match status" value="1"/>
</dbReference>
<dbReference type="Gene3D" id="1.10.150.420">
    <property type="entry name" value="Coronavirus nonstructural protein 4 C-terminus"/>
    <property type="match status" value="1"/>
</dbReference>
<dbReference type="Gene3D" id="3.40.220.10">
    <property type="entry name" value="Leucine Aminopeptidase, subunit E, domain 1"/>
    <property type="match status" value="1"/>
</dbReference>
<dbReference type="Gene3D" id="1.10.1840.10">
    <property type="entry name" value="main proteinase (3clpro) structure, domain 3"/>
    <property type="match status" value="1"/>
</dbReference>
<dbReference type="Gene3D" id="1.10.8.370">
    <property type="entry name" value="nsp7 replicase"/>
    <property type="match status" value="1"/>
</dbReference>
<dbReference type="Gene3D" id="3.30.70.3540">
    <property type="entry name" value="Nsp8 replicase, head domain"/>
    <property type="match status" value="1"/>
</dbReference>
<dbReference type="Gene3D" id="2.40.10.250">
    <property type="entry name" value="Replicase NSP9"/>
    <property type="match status" value="1"/>
</dbReference>
<dbReference type="Gene3D" id="3.40.50.11020">
    <property type="entry name" value="Replicase polyprotein, nucleic acid-binding domain"/>
    <property type="match status" value="1"/>
</dbReference>
<dbReference type="Gene3D" id="2.40.10.10">
    <property type="entry name" value="Trypsin-like serine proteases"/>
    <property type="match status" value="2"/>
</dbReference>
<dbReference type="InterPro" id="IPR046443">
    <property type="entry name" value="a/bCoV_NSP1_glob"/>
</dbReference>
<dbReference type="InterPro" id="IPR022570">
    <property type="entry name" value="B-CoV_A_NSP1"/>
</dbReference>
<dbReference type="InterPro" id="IPR046442">
    <property type="entry name" value="bCoV_NSP1_C"/>
</dbReference>
<dbReference type="InterPro" id="IPR043613">
    <property type="entry name" value="CoV_NSP2_C"/>
</dbReference>
<dbReference type="InterPro" id="IPR047573">
    <property type="entry name" value="CoV_NSP2_M"/>
</dbReference>
<dbReference type="InterPro" id="IPR049894">
    <property type="entry name" value="COV_NSP3_3ECTO"/>
</dbReference>
<dbReference type="InterPro" id="IPR043611">
    <property type="entry name" value="CoV_NSP3_C"/>
</dbReference>
<dbReference type="InterPro" id="IPR047566">
    <property type="entry name" value="CoV_NSP3_Y"/>
</dbReference>
<dbReference type="InterPro" id="IPR032505">
    <property type="entry name" value="CoV_NSP4_C"/>
</dbReference>
<dbReference type="InterPro" id="IPR043612">
    <property type="entry name" value="CoV_NSP4_N"/>
</dbReference>
<dbReference type="InterPro" id="IPR022733">
    <property type="entry name" value="DPUP_SUD_C_bCoV"/>
</dbReference>
<dbReference type="InterPro" id="IPR002589">
    <property type="entry name" value="Macro_dom"/>
</dbReference>
<dbReference type="InterPro" id="IPR043472">
    <property type="entry name" value="Macro_dom-like"/>
</dbReference>
<dbReference type="InterPro" id="IPR044371">
    <property type="entry name" value="Macro_X_NSP3-like"/>
</dbReference>
<dbReference type="InterPro" id="IPR036333">
    <property type="entry name" value="NSP10_sf_CoV"/>
</dbReference>
<dbReference type="InterPro" id="IPR044384">
    <property type="entry name" value="NSP2_MHV-like"/>
</dbReference>
<dbReference type="InterPro" id="IPR043615">
    <property type="entry name" value="NSP2_N_CoV"/>
</dbReference>
<dbReference type="InterPro" id="IPR044381">
    <property type="entry name" value="NSP3_DPUP_MHV"/>
</dbReference>
<dbReference type="InterPro" id="IPR047567">
    <property type="entry name" value="NSP3_G2M_bCoV"/>
</dbReference>
<dbReference type="InterPro" id="IPR032592">
    <property type="entry name" value="NSP3_NAB_bCoV"/>
</dbReference>
<dbReference type="InterPro" id="IPR042570">
    <property type="entry name" value="NSP3_NAB_bCoV_sf"/>
</dbReference>
<dbReference type="InterPro" id="IPR044357">
    <property type="entry name" value="NSP3_Ubl1_dom_CoV"/>
</dbReference>
<dbReference type="InterPro" id="IPR044353">
    <property type="entry name" value="Nsp3_Ubl2_dom_CoV"/>
</dbReference>
<dbReference type="InterPro" id="IPR038083">
    <property type="entry name" value="NSP3A-like"/>
</dbReference>
<dbReference type="InterPro" id="IPR038123">
    <property type="entry name" value="NSP4_C_sf_CoV"/>
</dbReference>
<dbReference type="InterPro" id="IPR044367">
    <property type="entry name" value="NSP6_betaCoV"/>
</dbReference>
<dbReference type="InterPro" id="IPR043610">
    <property type="entry name" value="NSP6_CoV"/>
</dbReference>
<dbReference type="InterPro" id="IPR014828">
    <property type="entry name" value="NSP7_CoV"/>
</dbReference>
<dbReference type="InterPro" id="IPR037204">
    <property type="entry name" value="NSP7_sf_CoV"/>
</dbReference>
<dbReference type="InterPro" id="IPR014829">
    <property type="entry name" value="NSP8_CoV"/>
</dbReference>
<dbReference type="InterPro" id="IPR037230">
    <property type="entry name" value="NSP8_sf_CoV"/>
</dbReference>
<dbReference type="InterPro" id="IPR014822">
    <property type="entry name" value="NSP9_CoV"/>
</dbReference>
<dbReference type="InterPro" id="IPR036499">
    <property type="entry name" value="NSP9_sf_CoV"/>
</dbReference>
<dbReference type="InterPro" id="IPR002705">
    <property type="entry name" value="Pept_C30/C16_B_coronavir"/>
</dbReference>
<dbReference type="InterPro" id="IPR013016">
    <property type="entry name" value="Peptidase_C16_CoV"/>
</dbReference>
<dbReference type="InterPro" id="IPR008740">
    <property type="entry name" value="Peptidase_C30_CoV"/>
</dbReference>
<dbReference type="InterPro" id="IPR043477">
    <property type="entry name" value="Peptidase_C30_dom3_CoV"/>
</dbReference>
<dbReference type="InterPro" id="IPR009003">
    <property type="entry name" value="Peptidase_S1_PA"/>
</dbReference>
<dbReference type="InterPro" id="IPR043504">
    <property type="entry name" value="Peptidase_S1_PA_chymotrypsin"/>
</dbReference>
<dbReference type="InterPro" id="IPR043177">
    <property type="entry name" value="PLpro_N_sf_CoV"/>
</dbReference>
<dbReference type="InterPro" id="IPR043503">
    <property type="entry name" value="PLpro_palm_finger_dom_CoV"/>
</dbReference>
<dbReference type="InterPro" id="IPR043178">
    <property type="entry name" value="PLpro_thumb_sf_CoV"/>
</dbReference>
<dbReference type="InterPro" id="IPR018995">
    <property type="entry name" value="RNA_synth_NSP10_CoV"/>
</dbReference>
<dbReference type="Pfam" id="PF11963">
    <property type="entry name" value="B-CoV_A_NSP1"/>
    <property type="match status" value="1"/>
</dbReference>
<dbReference type="Pfam" id="PF16251">
    <property type="entry name" value="bCoV_NAB"/>
    <property type="match status" value="1"/>
</dbReference>
<dbReference type="Pfam" id="PF09401">
    <property type="entry name" value="CoV_NSP10"/>
    <property type="match status" value="1"/>
</dbReference>
<dbReference type="Pfam" id="PF19218">
    <property type="entry name" value="CoV_NSP3_C"/>
    <property type="match status" value="1"/>
</dbReference>
<dbReference type="Pfam" id="PF16348">
    <property type="entry name" value="CoV_NSP4_C"/>
    <property type="match status" value="1"/>
</dbReference>
<dbReference type="Pfam" id="PF19217">
    <property type="entry name" value="CoV_NSP4_N"/>
    <property type="match status" value="1"/>
</dbReference>
<dbReference type="Pfam" id="PF19213">
    <property type="entry name" value="CoV_NSP6"/>
    <property type="match status" value="1"/>
</dbReference>
<dbReference type="Pfam" id="PF08716">
    <property type="entry name" value="CoV_NSP7"/>
    <property type="match status" value="1"/>
</dbReference>
<dbReference type="Pfam" id="PF08717">
    <property type="entry name" value="CoV_NSP8"/>
    <property type="match status" value="1"/>
</dbReference>
<dbReference type="Pfam" id="PF08710">
    <property type="entry name" value="CoV_NSP9"/>
    <property type="match status" value="1"/>
</dbReference>
<dbReference type="Pfam" id="PF08715">
    <property type="entry name" value="CoV_peptidase"/>
    <property type="match status" value="1"/>
</dbReference>
<dbReference type="Pfam" id="PF01661">
    <property type="entry name" value="Macro"/>
    <property type="match status" value="1"/>
</dbReference>
<dbReference type="Pfam" id="PF22104">
    <property type="entry name" value="MHV_Nsp3_DPUP"/>
    <property type="match status" value="1"/>
</dbReference>
<dbReference type="Pfam" id="PF01831">
    <property type="entry name" value="Peptidase_C16"/>
    <property type="match status" value="1"/>
</dbReference>
<dbReference type="Pfam" id="PF05409">
    <property type="entry name" value="Peptidase_C30"/>
    <property type="match status" value="1"/>
</dbReference>
<dbReference type="SMART" id="SM00506">
    <property type="entry name" value="A1pp"/>
    <property type="match status" value="1"/>
</dbReference>
<dbReference type="SUPFAM" id="SSF144246">
    <property type="entry name" value="Coronavirus NSP10-like"/>
    <property type="match status" value="1"/>
</dbReference>
<dbReference type="SUPFAM" id="SSF140367">
    <property type="entry name" value="Coronavirus NSP7-like"/>
    <property type="match status" value="1"/>
</dbReference>
<dbReference type="SUPFAM" id="SSF143076">
    <property type="entry name" value="Coronavirus NSP8-like"/>
    <property type="match status" value="1"/>
</dbReference>
<dbReference type="SUPFAM" id="SSF52949">
    <property type="entry name" value="Macro domain-like"/>
    <property type="match status" value="1"/>
</dbReference>
<dbReference type="SUPFAM" id="SSF159936">
    <property type="entry name" value="NSP3A-like"/>
    <property type="match status" value="1"/>
</dbReference>
<dbReference type="SUPFAM" id="SSF101816">
    <property type="entry name" value="Replicase NSP9"/>
    <property type="match status" value="1"/>
</dbReference>
<dbReference type="SUPFAM" id="SSF50494">
    <property type="entry name" value="Trypsin-like serine proteases"/>
    <property type="match status" value="1"/>
</dbReference>
<dbReference type="PROSITE" id="PS51963">
    <property type="entry name" value="BCOV_NSP1_C"/>
    <property type="match status" value="1"/>
</dbReference>
<dbReference type="PROSITE" id="PS51942">
    <property type="entry name" value="BCOV_NSP3C_C"/>
    <property type="match status" value="1"/>
</dbReference>
<dbReference type="PROSITE" id="PS51994">
    <property type="entry name" value="BCOV_NSP3E_G2M"/>
    <property type="match status" value="1"/>
</dbReference>
<dbReference type="PROSITE" id="PS51945">
    <property type="entry name" value="BCOV_NSP3E_NAB"/>
    <property type="match status" value="1"/>
</dbReference>
<dbReference type="PROSITE" id="PS51993">
    <property type="entry name" value="COV_3ECTO"/>
    <property type="match status" value="1"/>
</dbReference>
<dbReference type="PROSITE" id="PS51952">
    <property type="entry name" value="COV_EXON_MTASE_COACT"/>
    <property type="match status" value="1"/>
</dbReference>
<dbReference type="PROSITE" id="PS51962">
    <property type="entry name" value="COV_NSP1"/>
    <property type="match status" value="1"/>
</dbReference>
<dbReference type="PROSITE" id="PS51991">
    <property type="entry name" value="COV_NSP2_C"/>
    <property type="match status" value="1"/>
</dbReference>
<dbReference type="PROSITE" id="PS51990">
    <property type="entry name" value="COV_NSP2_M"/>
    <property type="match status" value="1"/>
</dbReference>
<dbReference type="PROSITE" id="PS51989">
    <property type="entry name" value="COV_NSP2_N"/>
    <property type="match status" value="1"/>
</dbReference>
<dbReference type="PROSITE" id="PS51992">
    <property type="entry name" value="COV_NSP3_Y"/>
    <property type="match status" value="1"/>
</dbReference>
<dbReference type="PROSITE" id="PS51943">
    <property type="entry name" value="COV_NSP3A_UBL"/>
    <property type="match status" value="1"/>
</dbReference>
<dbReference type="PROSITE" id="PS51944">
    <property type="entry name" value="COV_NSP3D_UBL"/>
    <property type="match status" value="1"/>
</dbReference>
<dbReference type="PROSITE" id="PS51946">
    <property type="entry name" value="COV_NSP4C"/>
    <property type="match status" value="1"/>
</dbReference>
<dbReference type="PROSITE" id="PS51949">
    <property type="entry name" value="COV_NSP7"/>
    <property type="match status" value="1"/>
</dbReference>
<dbReference type="PROSITE" id="PS51950">
    <property type="entry name" value="COV_NSP8"/>
    <property type="match status" value="1"/>
</dbReference>
<dbReference type="PROSITE" id="PS51951">
    <property type="entry name" value="COV_NSP9_SSRNA_BD"/>
    <property type="match status" value="1"/>
</dbReference>
<dbReference type="PROSITE" id="PS51442">
    <property type="entry name" value="M_PRO"/>
    <property type="match status" value="1"/>
</dbReference>
<dbReference type="PROSITE" id="PS51154">
    <property type="entry name" value="MACRO"/>
    <property type="match status" value="1"/>
</dbReference>
<dbReference type="PROSITE" id="PS51124">
    <property type="entry name" value="PEPTIDASE_C16"/>
    <property type="match status" value="2"/>
</dbReference>
<keyword id="KW-1072">Activation of host autophagy by virus</keyword>
<keyword id="KW-1132">Decay of host mRNAs by virus</keyword>
<keyword id="KW-1015">Disulfide bond</keyword>
<keyword id="KW-0255">Endonuclease</keyword>
<keyword id="KW-1262">Eukaryotic host gene expression shutoff by virus</keyword>
<keyword id="KW-1193">Eukaryotic host translation shutoff by virus</keyword>
<keyword id="KW-1035">Host cytoplasm</keyword>
<keyword id="KW-1190">Host gene expression shutoff by virus</keyword>
<keyword id="KW-1043">Host membrane</keyword>
<keyword id="KW-1192">Host mRNA suppression by virus</keyword>
<keyword id="KW-0945">Host-virus interaction</keyword>
<keyword id="KW-0378">Hydrolase</keyword>
<keyword id="KW-1090">Inhibition of host innate immune response by virus</keyword>
<keyword id="KW-1114">Inhibition of host interferon signaling pathway by virus</keyword>
<keyword id="KW-1092">Inhibition of host IRF3 by virus</keyword>
<keyword id="KW-1095">Inhibition of host ISG15 by virus</keyword>
<keyword id="KW-1113">Inhibition of host RLR pathway by virus</keyword>
<keyword id="KW-0922">Interferon antiviral system evasion</keyword>
<keyword id="KW-0472">Membrane</keyword>
<keyword id="KW-0479">Metal-binding</keyword>
<keyword id="KW-0489">Methyltransferase</keyword>
<keyword id="KW-1127">Modulation of host ubiquitin pathway by viral deubiquitinase</keyword>
<keyword id="KW-1130">Modulation of host ubiquitin pathway by virus</keyword>
<keyword id="KW-0540">Nuclease</keyword>
<keyword id="KW-0645">Protease</keyword>
<keyword id="KW-1185">Reference proteome</keyword>
<keyword id="KW-0677">Repeat</keyword>
<keyword id="KW-0688">Ribosomal frameshifting</keyword>
<keyword id="KW-0694">RNA-binding</keyword>
<keyword id="KW-0788">Thiol protease</keyword>
<keyword id="KW-0808">Transferase</keyword>
<keyword id="KW-0812">Transmembrane</keyword>
<keyword id="KW-1133">Transmembrane helix</keyword>
<keyword id="KW-0833">Ubl conjugation pathway</keyword>
<keyword id="KW-0899">Viral immunoevasion</keyword>
<keyword id="KW-0862">Zinc</keyword>
<keyword id="KW-0863">Zinc-finger</keyword>
<feature type="chain" id="PRO_0000338218" description="Replicase polyprotein 1a">
    <location>
        <begin position="1"/>
        <end position="4421"/>
    </location>
</feature>
<feature type="chain" id="PRO_0000338219" description="Non-structural protein 1" evidence="1">
    <location>
        <begin position="1"/>
        <end position="222"/>
    </location>
</feature>
<feature type="chain" id="PRO_0000338220" description="Non-structural protein 2" evidence="1">
    <location>
        <begin position="223"/>
        <end position="809"/>
    </location>
</feature>
<feature type="chain" id="PRO_0000338221" description="Papain-like protease nsp3" evidence="1">
    <location>
        <begin position="810"/>
        <end position="2788"/>
    </location>
</feature>
<feature type="chain" id="PRO_0000338222" description="Non-structural protein 4" evidence="1">
    <location>
        <begin position="2789"/>
        <end position="3284"/>
    </location>
</feature>
<feature type="chain" id="PRO_0000338223" description="3C-like proteinase nsp5" evidence="1">
    <location>
        <begin position="3285"/>
        <end position="3587"/>
    </location>
</feature>
<feature type="chain" id="PRO_0000338224" description="Non-structural protein 6" evidence="1">
    <location>
        <begin position="3588"/>
        <end position="3874"/>
    </location>
</feature>
<feature type="chain" id="PRO_0000338225" description="Non-structural protein 7" evidence="1">
    <location>
        <begin position="3875"/>
        <end position="3966"/>
    </location>
</feature>
<feature type="chain" id="PRO_0000338226" description="Non-structural protein 8" evidence="1">
    <location>
        <begin position="3967"/>
        <end position="4160"/>
    </location>
</feature>
<feature type="chain" id="PRO_0000338227" description="RNA-capping enzyme subunit nsp9" evidence="1">
    <location>
        <begin position="4161"/>
        <end position="4270"/>
    </location>
</feature>
<feature type="chain" id="PRO_0000338228" description="Non-structural protein 10" evidence="1">
    <location>
        <begin position="4271"/>
        <end position="4407"/>
    </location>
</feature>
<feature type="chain" id="PRO_0000338229" description="Non-structural protein 11" evidence="3">
    <location>
        <begin position="4408"/>
        <end position="4421"/>
    </location>
</feature>
<feature type="transmembrane region" description="Helical" evidence="3">
    <location>
        <begin position="2176"/>
        <end position="2196"/>
    </location>
</feature>
<feature type="transmembrane region" description="Helical" evidence="3">
    <location>
        <begin position="2237"/>
        <end position="2257"/>
    </location>
</feature>
<feature type="transmembrane region" description="Helical" evidence="3">
    <location>
        <begin position="2268"/>
        <end position="2288"/>
    </location>
</feature>
<feature type="transmembrane region" description="Helical" evidence="3">
    <location>
        <begin position="2351"/>
        <end position="2371"/>
    </location>
</feature>
<feature type="transmembrane region" description="Helical" evidence="3">
    <location>
        <begin position="2393"/>
        <end position="2413"/>
    </location>
</feature>
<feature type="transmembrane region" description="Helical" evidence="3">
    <location>
        <begin position="2794"/>
        <end position="2814"/>
    </location>
</feature>
<feature type="transmembrane region" description="Helical" evidence="3">
    <location>
        <begin position="3069"/>
        <end position="3089"/>
    </location>
</feature>
<feature type="transmembrane region" description="Helical" evidence="3">
    <location>
        <begin position="3101"/>
        <end position="3121"/>
    </location>
</feature>
<feature type="transmembrane region" description="Helical" evidence="3">
    <location>
        <begin position="3128"/>
        <end position="3148"/>
    </location>
</feature>
<feature type="transmembrane region" description="Helical" evidence="3">
    <location>
        <begin position="3153"/>
        <end position="3173"/>
    </location>
</feature>
<feature type="transmembrane region" description="Helical" evidence="3">
    <location>
        <begin position="3601"/>
        <end position="3621"/>
    </location>
</feature>
<feature type="transmembrane region" description="Helical" evidence="3">
    <location>
        <begin position="3626"/>
        <end position="3646"/>
    </location>
</feature>
<feature type="transmembrane region" description="Helical" evidence="3">
    <location>
        <begin position="3651"/>
        <end position="3671"/>
    </location>
</feature>
<feature type="transmembrane region" description="Helical" evidence="3">
    <location>
        <begin position="3694"/>
        <end position="3714"/>
    </location>
</feature>
<feature type="transmembrane region" description="Helical" evidence="3">
    <location>
        <begin position="3722"/>
        <end position="3742"/>
    </location>
</feature>
<feature type="transmembrane region" description="Helical" evidence="3">
    <location>
        <begin position="3750"/>
        <end position="3770"/>
    </location>
</feature>
<feature type="transmembrane region" description="Helical" evidence="3">
    <location>
        <begin position="3793"/>
        <end position="3813"/>
    </location>
</feature>
<feature type="domain" description="CoV Nsp1 globular" evidence="15">
    <location>
        <begin position="54"/>
        <end position="174"/>
    </location>
</feature>
<feature type="domain" description="BetaCoV Nsp1 C-terminal" evidence="16">
    <location>
        <begin position="192"/>
        <end position="222"/>
    </location>
</feature>
<feature type="domain" description="CoV Nsp2 N-terminal" evidence="17">
    <location>
        <begin position="226"/>
        <end position="488"/>
    </location>
</feature>
<feature type="domain" description="CoV Nsp2 middle" evidence="18">
    <location>
        <begin position="493"/>
        <end position="681"/>
    </location>
</feature>
<feature type="domain" description="CoV Nsp2 C-terminal" evidence="19">
    <location>
        <begin position="697"/>
        <end position="809"/>
    </location>
</feature>
<feature type="domain" description="Ubiquitin-like 1" evidence="4">
    <location>
        <begin position="811"/>
        <end position="923"/>
    </location>
</feature>
<feature type="repeat" description="1">
    <location>
        <begin position="945"/>
        <end position="954"/>
    </location>
</feature>
<feature type="repeat" description="2">
    <location>
        <begin position="955"/>
        <end position="964"/>
    </location>
</feature>
<feature type="repeat" description="3">
    <location>
        <begin position="965"/>
        <end position="974"/>
    </location>
</feature>
<feature type="repeat" description="4">
    <location>
        <begin position="975"/>
        <end position="984"/>
    </location>
</feature>
<feature type="repeat" description="5">
    <location>
        <begin position="985"/>
        <end position="994"/>
    </location>
</feature>
<feature type="repeat" description="6">
    <location>
        <begin position="995"/>
        <end position="1004"/>
    </location>
</feature>
<feature type="repeat" description="7">
    <location>
        <begin position="1005"/>
        <end position="1014"/>
    </location>
</feature>
<feature type="repeat" description="8">
    <location>
        <begin position="1015"/>
        <end position="1024"/>
    </location>
</feature>
<feature type="repeat" description="9">
    <location>
        <begin position="1025"/>
        <end position="1034"/>
    </location>
</feature>
<feature type="domain" description="Peptidase C16 1" evidence="5">
    <location>
        <begin position="1073"/>
        <end position="1323"/>
    </location>
</feature>
<feature type="domain" description="Macro" evidence="6">
    <location>
        <begin position="1301"/>
        <end position="1472"/>
    </location>
</feature>
<feature type="domain" description="DPUP" evidence="8">
    <location>
        <begin position="1528"/>
        <end position="1599"/>
    </location>
</feature>
<feature type="domain" description="Ubiquitin-like 2" evidence="4">
    <location>
        <begin position="1599"/>
        <end position="1654"/>
    </location>
</feature>
<feature type="domain" description="Peptidase C16 2" evidence="5">
    <location>
        <begin position="1668"/>
        <end position="1928"/>
    </location>
</feature>
<feature type="domain" description="Nucleic acid-binding" evidence="9">
    <location>
        <begin position="1942"/>
        <end position="2043"/>
    </location>
</feature>
<feature type="domain" description="G2M" evidence="22">
    <location>
        <begin position="2058"/>
        <end position="2207"/>
    </location>
</feature>
<feature type="domain" description="3Ecto" evidence="21">
    <location>
        <begin position="2273"/>
        <end position="2334"/>
    </location>
</feature>
<feature type="domain" description="CoV Nsp3 Y" evidence="20">
    <location>
        <begin position="2421"/>
        <end position="2788"/>
    </location>
</feature>
<feature type="domain" description="Nsp4C" evidence="10">
    <location>
        <begin position="3187"/>
        <end position="3284"/>
    </location>
</feature>
<feature type="domain" description="Peptidase C30" evidence="7">
    <location>
        <begin position="3285"/>
        <end position="3587"/>
    </location>
</feature>
<feature type="domain" description="RdRp Nsp7 cofactor" evidence="11">
    <location>
        <begin position="3875"/>
        <end position="3963"/>
    </location>
</feature>
<feature type="domain" description="RdRp Nsp8 cofactor" evidence="12">
    <location>
        <begin position="3964"/>
        <end position="4160"/>
    </location>
</feature>
<feature type="domain" description="Nsp9 ssRNA-binding" evidence="13">
    <location>
        <begin position="4161"/>
        <end position="4270"/>
    </location>
</feature>
<feature type="domain" description="ExoN/MTase coactivator" evidence="14">
    <location>
        <begin position="4271"/>
        <end position="4408"/>
    </location>
</feature>
<feature type="zinc finger region" description="C4-type 1" evidence="5">
    <location>
        <begin position="1188"/>
        <end position="1216"/>
    </location>
</feature>
<feature type="zinc finger region" description="C4-type 2" evidence="5">
    <location>
        <begin position="1785"/>
        <end position="1821"/>
    </location>
</feature>
<feature type="zinc finger region" evidence="1">
    <location>
        <begin position="4344"/>
        <end position="4360"/>
    </location>
</feature>
<feature type="zinc finger region" evidence="1">
    <location>
        <begin position="4386"/>
        <end position="4399"/>
    </location>
</feature>
<feature type="region of interest" description="C4" evidence="17">
    <location>
        <begin position="365"/>
        <end position="389"/>
    </location>
</feature>
<feature type="region of interest" description="9 X 10 AA tandem repeat of N-[DN]-D-E-D-V-V-T-G-D">
    <location>
        <begin position="945"/>
        <end position="1034"/>
    </location>
</feature>
<feature type="region of interest" description="Disordered" evidence="23">
    <location>
        <begin position="947"/>
        <end position="1042"/>
    </location>
</feature>
<feature type="region of interest" description="HD1" evidence="1">
    <location>
        <begin position="2176"/>
        <end position="2413"/>
    </location>
</feature>
<feature type="region of interest" description="Y1" evidence="20">
    <location>
        <begin position="2421"/>
        <end position="2511"/>
    </location>
</feature>
<feature type="region of interest" description="ZF1" evidence="20">
    <location>
        <begin position="2425"/>
        <end position="2438"/>
    </location>
</feature>
<feature type="region of interest" description="ZF2" evidence="20">
    <location>
        <begin position="2471"/>
        <end position="2481"/>
    </location>
</feature>
<feature type="region of interest" description="CoV-Y" evidence="20">
    <location>
        <begin position="2512"/>
        <end position="2788"/>
    </location>
</feature>
<feature type="region of interest" description="Y2" evidence="20">
    <location>
        <begin position="2512"/>
        <end position="2604"/>
    </location>
</feature>
<feature type="region of interest" description="Y3" evidence="20">
    <location>
        <begin position="2605"/>
        <end position="2687"/>
    </location>
</feature>
<feature type="region of interest" description="Y4" evidence="20">
    <location>
        <begin position="2688"/>
        <end position="2788"/>
    </location>
</feature>
<feature type="region of interest" description="HD2" evidence="1">
    <location>
        <begin position="2794"/>
        <end position="3173"/>
    </location>
</feature>
<feature type="region of interest" description="HD3" evidence="1">
    <location>
        <begin position="3601"/>
        <end position="3813"/>
    </location>
</feature>
<feature type="active site" description="For PL1-PRO activity" evidence="5">
    <location>
        <position position="1111"/>
    </location>
</feature>
<feature type="active site" description="For PL1-PRO activity" evidence="5">
    <location>
        <position position="1262"/>
    </location>
</feature>
<feature type="active site" description="For PL1-PRO activity" evidence="5">
    <location>
        <position position="1273"/>
    </location>
</feature>
<feature type="active site" description="For PL2-PRO activity" evidence="5">
    <location>
        <position position="1707"/>
    </location>
</feature>
<feature type="active site" description="For PL2-PRO activity" evidence="5">
    <location>
        <position position="1864"/>
    </location>
</feature>
<feature type="active site" description="For PL2-PRO activity" evidence="5">
    <location>
        <position position="1878"/>
    </location>
</feature>
<feature type="active site" description="For 3CL-PRO activity" evidence="7">
    <location>
        <position position="3325"/>
    </location>
</feature>
<feature type="active site" description="For 3CL-PRO activity" evidence="7">
    <location>
        <position position="3429"/>
    </location>
</feature>
<feature type="binding site" evidence="17">
    <location>
        <position position="365"/>
    </location>
    <ligand>
        <name>Zn(2+)</name>
        <dbReference type="ChEBI" id="CHEBI:29105"/>
        <label>1</label>
    </ligand>
</feature>
<feature type="binding site" evidence="17">
    <location>
        <position position="370"/>
    </location>
    <ligand>
        <name>Zn(2+)</name>
        <dbReference type="ChEBI" id="CHEBI:29105"/>
        <label>1</label>
    </ligand>
</feature>
<feature type="binding site" evidence="17">
    <location>
        <position position="386"/>
    </location>
    <ligand>
        <name>Zn(2+)</name>
        <dbReference type="ChEBI" id="CHEBI:29105"/>
        <label>1</label>
    </ligand>
</feature>
<feature type="binding site" evidence="17">
    <location>
        <position position="389"/>
    </location>
    <ligand>
        <name>Zn(2+)</name>
        <dbReference type="ChEBI" id="CHEBI:29105"/>
        <label>1</label>
    </ligand>
</feature>
<feature type="binding site" evidence="5">
    <location>
        <position position="1188"/>
    </location>
    <ligand>
        <name>Zn(2+)</name>
        <dbReference type="ChEBI" id="CHEBI:29105"/>
        <label>2</label>
    </ligand>
</feature>
<feature type="binding site" evidence="5">
    <location>
        <position position="1191"/>
    </location>
    <ligand>
        <name>Zn(2+)</name>
        <dbReference type="ChEBI" id="CHEBI:29105"/>
        <label>2</label>
    </ligand>
</feature>
<feature type="binding site" evidence="5">
    <location>
        <position position="1214"/>
    </location>
    <ligand>
        <name>Zn(2+)</name>
        <dbReference type="ChEBI" id="CHEBI:29105"/>
        <label>2</label>
    </ligand>
</feature>
<feature type="binding site" evidence="5">
    <location>
        <position position="1216"/>
    </location>
    <ligand>
        <name>Zn(2+)</name>
        <dbReference type="ChEBI" id="CHEBI:29105"/>
        <label>2</label>
    </ligand>
</feature>
<feature type="binding site" evidence="5">
    <location>
        <position position="1785"/>
    </location>
    <ligand>
        <name>Zn(2+)</name>
        <dbReference type="ChEBI" id="CHEBI:29105"/>
        <label>3</label>
    </ligand>
</feature>
<feature type="binding site" evidence="5">
    <location>
        <position position="1787"/>
    </location>
    <ligand>
        <name>Zn(2+)</name>
        <dbReference type="ChEBI" id="CHEBI:29105"/>
        <label>3</label>
    </ligand>
</feature>
<feature type="binding site" evidence="5">
    <location>
        <position position="1819"/>
    </location>
    <ligand>
        <name>Zn(2+)</name>
        <dbReference type="ChEBI" id="CHEBI:29105"/>
        <label>3</label>
    </ligand>
</feature>
<feature type="binding site" evidence="5">
    <location>
        <position position="1821"/>
    </location>
    <ligand>
        <name>Zn(2+)</name>
        <dbReference type="ChEBI" id="CHEBI:29105"/>
        <label>3</label>
    </ligand>
</feature>
<feature type="binding site" evidence="20">
    <location>
        <position position="2425"/>
    </location>
    <ligand>
        <name>Zn(2+)</name>
        <dbReference type="ChEBI" id="CHEBI:29105"/>
        <label>4</label>
    </ligand>
</feature>
<feature type="binding site" evidence="20">
    <location>
        <position position="2430"/>
    </location>
    <ligand>
        <name>Zn(2+)</name>
        <dbReference type="ChEBI" id="CHEBI:29105"/>
        <label>4</label>
    </ligand>
</feature>
<feature type="binding site" evidence="20">
    <location>
        <position position="2435"/>
    </location>
    <ligand>
        <name>Zn(2+)</name>
        <dbReference type="ChEBI" id="CHEBI:29105"/>
        <label>4</label>
    </ligand>
</feature>
<feature type="binding site" evidence="20">
    <location>
        <position position="2438"/>
    </location>
    <ligand>
        <name>Zn(2+)</name>
        <dbReference type="ChEBI" id="CHEBI:29105"/>
        <label>4</label>
    </ligand>
</feature>
<feature type="binding site" evidence="20">
    <location>
        <position position="2471"/>
    </location>
    <ligand>
        <name>Zn(2+)</name>
        <dbReference type="ChEBI" id="CHEBI:29105"/>
        <label>5</label>
    </ligand>
</feature>
<feature type="binding site" evidence="20">
    <location>
        <position position="2474"/>
    </location>
    <ligand>
        <name>Zn(2+)</name>
        <dbReference type="ChEBI" id="CHEBI:29105"/>
        <label>5</label>
    </ligand>
</feature>
<feature type="binding site" evidence="20">
    <location>
        <position position="2478"/>
    </location>
    <ligand>
        <name>Zn(2+)</name>
        <dbReference type="ChEBI" id="CHEBI:29105"/>
        <label>5</label>
    </ligand>
</feature>
<feature type="binding site" evidence="20">
    <location>
        <position position="2481"/>
    </location>
    <ligand>
        <name>Zn(2+)</name>
        <dbReference type="ChEBI" id="CHEBI:29105"/>
        <label>5</label>
    </ligand>
</feature>
<feature type="binding site" evidence="14">
    <location>
        <position position="4344"/>
    </location>
    <ligand>
        <name>Zn(2+)</name>
        <dbReference type="ChEBI" id="CHEBI:29105"/>
        <label>6</label>
    </ligand>
</feature>
<feature type="binding site" evidence="14">
    <location>
        <position position="4347"/>
    </location>
    <ligand>
        <name>Zn(2+)</name>
        <dbReference type="ChEBI" id="CHEBI:29105"/>
        <label>6</label>
    </ligand>
</feature>
<feature type="binding site" evidence="14">
    <location>
        <position position="4353"/>
    </location>
    <ligand>
        <name>Zn(2+)</name>
        <dbReference type="ChEBI" id="CHEBI:29105"/>
        <label>6</label>
    </ligand>
</feature>
<feature type="binding site" evidence="14">
    <location>
        <position position="4360"/>
    </location>
    <ligand>
        <name>Zn(2+)</name>
        <dbReference type="ChEBI" id="CHEBI:29105"/>
        <label>6</label>
    </ligand>
</feature>
<feature type="binding site" evidence="14">
    <location>
        <position position="4386"/>
    </location>
    <ligand>
        <name>Zn(2+)</name>
        <dbReference type="ChEBI" id="CHEBI:29105"/>
        <label>7</label>
    </ligand>
</feature>
<feature type="binding site" evidence="14">
    <location>
        <position position="4389"/>
    </location>
    <ligand>
        <name>Zn(2+)</name>
        <dbReference type="ChEBI" id="CHEBI:29105"/>
        <label>7</label>
    </ligand>
</feature>
<feature type="binding site" evidence="14">
    <location>
        <position position="4397"/>
    </location>
    <ligand>
        <name>Zn(2+)</name>
        <dbReference type="ChEBI" id="CHEBI:29105"/>
        <label>7</label>
    </ligand>
</feature>
<feature type="binding site" evidence="14">
    <location>
        <position position="4399"/>
    </location>
    <ligand>
        <name>Zn(2+)</name>
        <dbReference type="ChEBI" id="CHEBI:29105"/>
        <label>7</label>
    </ligand>
</feature>
<feature type="site" description="Cleavage; by PL1-PRO" evidence="1">
    <location>
        <begin position="222"/>
        <end position="223"/>
    </location>
</feature>
<feature type="site" description="Cleavage; by PL1-PRO" evidence="1">
    <location>
        <begin position="809"/>
        <end position="810"/>
    </location>
</feature>
<feature type="site" description="Cleavage; by PL2-PRO" evidence="1">
    <location>
        <begin position="2788"/>
        <end position="2789"/>
    </location>
</feature>
<feature type="site" description="Cleavage; by 3CL-PRO" evidence="1">
    <location>
        <begin position="3284"/>
        <end position="3285"/>
    </location>
</feature>
<feature type="site" description="Cleavage; by 3CL-PRO" evidence="1">
    <location>
        <begin position="3587"/>
        <end position="3588"/>
    </location>
</feature>
<feature type="site" description="Cleavage; by 3CL-PRO" evidence="1">
    <location>
        <begin position="3874"/>
        <end position="3875"/>
    </location>
</feature>
<feature type="site" description="Cleavage; by 3CL-PRO" evidence="1">
    <location>
        <begin position="3966"/>
        <end position="3967"/>
    </location>
</feature>
<feature type="site" description="Cleavage; by 3CL-PRO" evidence="1">
    <location>
        <begin position="4160"/>
        <end position="4161"/>
    </location>
</feature>
<feature type="site" description="Cleavage; by 3CL-PRO" evidence="1">
    <location>
        <begin position="4270"/>
        <end position="4271"/>
    </location>
</feature>
<feature type="site" description="Cleavage; by 3CL-PRO" evidence="1">
    <location>
        <begin position="4407"/>
        <end position="4408"/>
    </location>
</feature>
<feature type="disulfide bond" evidence="21">
    <location>
        <begin position="2289"/>
        <end position="2313"/>
    </location>
</feature>
<feature type="disulfide bond" evidence="21">
    <location>
        <begin position="2304"/>
        <end position="2310"/>
    </location>
</feature>
<evidence type="ECO:0000250" key="1"/>
<evidence type="ECO:0000250" key="2">
    <source>
        <dbReference type="UniProtKB" id="P0DTC1"/>
    </source>
</evidence>
<evidence type="ECO:0000255" key="3"/>
<evidence type="ECO:0000255" key="4">
    <source>
        <dbReference type="PROSITE-ProRule" id="PRU00214"/>
    </source>
</evidence>
<evidence type="ECO:0000255" key="5">
    <source>
        <dbReference type="PROSITE-ProRule" id="PRU00444"/>
    </source>
</evidence>
<evidence type="ECO:0000255" key="6">
    <source>
        <dbReference type="PROSITE-ProRule" id="PRU00490"/>
    </source>
</evidence>
<evidence type="ECO:0000255" key="7">
    <source>
        <dbReference type="PROSITE-ProRule" id="PRU00772"/>
    </source>
</evidence>
<evidence type="ECO:0000255" key="8">
    <source>
        <dbReference type="PROSITE-ProRule" id="PRU01289"/>
    </source>
</evidence>
<evidence type="ECO:0000255" key="9">
    <source>
        <dbReference type="PROSITE-ProRule" id="PRU01290"/>
    </source>
</evidence>
<evidence type="ECO:0000255" key="10">
    <source>
        <dbReference type="PROSITE-ProRule" id="PRU01291"/>
    </source>
</evidence>
<evidence type="ECO:0000255" key="11">
    <source>
        <dbReference type="PROSITE-ProRule" id="PRU01294"/>
    </source>
</evidence>
<evidence type="ECO:0000255" key="12">
    <source>
        <dbReference type="PROSITE-ProRule" id="PRU01295"/>
    </source>
</evidence>
<evidence type="ECO:0000255" key="13">
    <source>
        <dbReference type="PROSITE-ProRule" id="PRU01296"/>
    </source>
</evidence>
<evidence type="ECO:0000255" key="14">
    <source>
        <dbReference type="PROSITE-ProRule" id="PRU01297"/>
    </source>
</evidence>
<evidence type="ECO:0000255" key="15">
    <source>
        <dbReference type="PROSITE-ProRule" id="PRU01307"/>
    </source>
</evidence>
<evidence type="ECO:0000255" key="16">
    <source>
        <dbReference type="PROSITE-ProRule" id="PRU01308"/>
    </source>
</evidence>
<evidence type="ECO:0000255" key="17">
    <source>
        <dbReference type="PROSITE-ProRule" id="PRU01333"/>
    </source>
</evidence>
<evidence type="ECO:0000255" key="18">
    <source>
        <dbReference type="PROSITE-ProRule" id="PRU01334"/>
    </source>
</evidence>
<evidence type="ECO:0000255" key="19">
    <source>
        <dbReference type="PROSITE-ProRule" id="PRU01335"/>
    </source>
</evidence>
<evidence type="ECO:0000255" key="20">
    <source>
        <dbReference type="PROSITE-ProRule" id="PRU01336"/>
    </source>
</evidence>
<evidence type="ECO:0000255" key="21">
    <source>
        <dbReference type="PROSITE-ProRule" id="PRU01337"/>
    </source>
</evidence>
<evidence type="ECO:0000255" key="22">
    <source>
        <dbReference type="PROSITE-ProRule" id="PRU01338"/>
    </source>
</evidence>
<evidence type="ECO:0000256" key="23">
    <source>
        <dbReference type="SAM" id="MobiDB-lite"/>
    </source>
</evidence>
<evidence type="ECO:0000305" key="24"/>
<organismHost>
    <name type="scientific">Homo sapiens</name>
    <name type="common">Human</name>
    <dbReference type="NCBI Taxonomy" id="9606"/>
</organismHost>
<gene>
    <name type="ORF">1a</name>
</gene>
<name>R1A_CVHN5</name>
<proteinExistence type="inferred from homology"/>